<sequence length="629" mass="70100">MFYQDPFDVIIIGGGHAGTEAAMAAARMGQQTLLLTHNIDTLGQMSCNPAIGGIGKGHLVKEVDALGGLMAKAIDQAGIQFRILNASKGPAVRATRAQADRVLYRQAVRTALENQPNLMIFQQAVEDLIVENDRVVGAVTQMGLKFRAKAVVLTVGTFLDGKIHIGLDNYSGGRAGDPPSIPLSRRLRELPLRVSRLKTGTPPRIDARTIDFSVLAQQHGDNPMPVFSFMGSADQHPRQVPCYITHTNEKTHDVIRNNLDRSPMYAGVIEGIGPRYCPSIEDKVMRFADRNQHQIFLEPEGLTSNEIYPNGISTSLPFDVQMQIVRSMQGMENARIVRPGYAIEYDFFDPRDLKPTLESKFIQGLFFAGQINGTTGYEEAAAQGLLAGLNAARFSAEKEGWAPRRDQAYLGVLVDDLCTLGTKEPYRMFTSRAEYRLMLREDNADLRLTEQGRELGLVDDERWARYNEKLESIERERQRLKSTWVNPQAESANEVNAHLTAPLSREASGEDLLRRPEMTYEQLVQLSPFTPGLEDRQAAEQVEIQVKYEGYIARQQDEIEKQQRNENTLLPATLDYRQVTGLSNEVIAKLNDHKPSSIGQASRISGITPAAISILLVWLKKQGMLRRSA</sequence>
<dbReference type="EMBL" id="CP000647">
    <property type="protein sequence ID" value="ABR79529.1"/>
    <property type="molecule type" value="Genomic_DNA"/>
</dbReference>
<dbReference type="RefSeq" id="WP_004144989.1">
    <property type="nucleotide sequence ID" value="NC_009648.1"/>
</dbReference>
<dbReference type="SMR" id="A6TG45"/>
<dbReference type="STRING" id="272620.KPN_04146"/>
<dbReference type="PaxDb" id="272620-KPN_04146"/>
<dbReference type="EnsemblBacteria" id="ABR79529">
    <property type="protein sequence ID" value="ABR79529"/>
    <property type="gene ID" value="KPN_04146"/>
</dbReference>
<dbReference type="KEGG" id="kpn:KPN_04146"/>
<dbReference type="HOGENOM" id="CLU_007831_2_2_6"/>
<dbReference type="Proteomes" id="UP000000265">
    <property type="component" value="Chromosome"/>
</dbReference>
<dbReference type="GO" id="GO:0005829">
    <property type="term" value="C:cytosol"/>
    <property type="evidence" value="ECO:0007669"/>
    <property type="project" value="TreeGrafter"/>
</dbReference>
<dbReference type="GO" id="GO:0050660">
    <property type="term" value="F:flavin adenine dinucleotide binding"/>
    <property type="evidence" value="ECO:0007669"/>
    <property type="project" value="UniProtKB-UniRule"/>
</dbReference>
<dbReference type="GO" id="GO:0030488">
    <property type="term" value="P:tRNA methylation"/>
    <property type="evidence" value="ECO:0007669"/>
    <property type="project" value="TreeGrafter"/>
</dbReference>
<dbReference type="GO" id="GO:0002098">
    <property type="term" value="P:tRNA wobble uridine modification"/>
    <property type="evidence" value="ECO:0007669"/>
    <property type="project" value="InterPro"/>
</dbReference>
<dbReference type="FunFam" id="1.10.10.1800:FF:000001">
    <property type="entry name" value="tRNA uridine 5-carboxymethylaminomethyl modification enzyme MnmG"/>
    <property type="match status" value="1"/>
</dbReference>
<dbReference type="FunFam" id="1.10.150.570:FF:000001">
    <property type="entry name" value="tRNA uridine 5-carboxymethylaminomethyl modification enzyme MnmG"/>
    <property type="match status" value="1"/>
</dbReference>
<dbReference type="FunFam" id="3.50.50.60:FF:000002">
    <property type="entry name" value="tRNA uridine 5-carboxymethylaminomethyl modification enzyme MnmG"/>
    <property type="match status" value="1"/>
</dbReference>
<dbReference type="FunFam" id="3.50.50.60:FF:000010">
    <property type="entry name" value="tRNA uridine 5-carboxymethylaminomethyl modification enzyme MnmG"/>
    <property type="match status" value="1"/>
</dbReference>
<dbReference type="Gene3D" id="3.50.50.60">
    <property type="entry name" value="FAD/NAD(P)-binding domain"/>
    <property type="match status" value="2"/>
</dbReference>
<dbReference type="Gene3D" id="1.10.150.570">
    <property type="entry name" value="GidA associated domain, C-terminal subdomain"/>
    <property type="match status" value="1"/>
</dbReference>
<dbReference type="Gene3D" id="1.10.10.1800">
    <property type="entry name" value="tRNA uridine 5-carboxymethylaminomethyl modification enzyme MnmG/GidA"/>
    <property type="match status" value="1"/>
</dbReference>
<dbReference type="HAMAP" id="MF_00129">
    <property type="entry name" value="MnmG_GidA"/>
    <property type="match status" value="1"/>
</dbReference>
<dbReference type="InterPro" id="IPR036188">
    <property type="entry name" value="FAD/NAD-bd_sf"/>
</dbReference>
<dbReference type="InterPro" id="IPR049312">
    <property type="entry name" value="GIDA_C_N"/>
</dbReference>
<dbReference type="InterPro" id="IPR004416">
    <property type="entry name" value="MnmG"/>
</dbReference>
<dbReference type="InterPro" id="IPR002218">
    <property type="entry name" value="MnmG-rel"/>
</dbReference>
<dbReference type="InterPro" id="IPR020595">
    <property type="entry name" value="MnmG-rel_CS"/>
</dbReference>
<dbReference type="InterPro" id="IPR026904">
    <property type="entry name" value="MnmG_C"/>
</dbReference>
<dbReference type="InterPro" id="IPR047001">
    <property type="entry name" value="MnmG_C_subdom"/>
</dbReference>
<dbReference type="InterPro" id="IPR044920">
    <property type="entry name" value="MnmG_C_subdom_sf"/>
</dbReference>
<dbReference type="InterPro" id="IPR040131">
    <property type="entry name" value="MnmG_N"/>
</dbReference>
<dbReference type="NCBIfam" id="TIGR00136">
    <property type="entry name" value="mnmG_gidA"/>
    <property type="match status" value="1"/>
</dbReference>
<dbReference type="PANTHER" id="PTHR11806">
    <property type="entry name" value="GLUCOSE INHIBITED DIVISION PROTEIN A"/>
    <property type="match status" value="1"/>
</dbReference>
<dbReference type="PANTHER" id="PTHR11806:SF0">
    <property type="entry name" value="PROTEIN MTO1 HOMOLOG, MITOCHONDRIAL"/>
    <property type="match status" value="1"/>
</dbReference>
<dbReference type="Pfam" id="PF01134">
    <property type="entry name" value="GIDA"/>
    <property type="match status" value="1"/>
</dbReference>
<dbReference type="Pfam" id="PF21680">
    <property type="entry name" value="GIDA_C_1st"/>
    <property type="match status" value="1"/>
</dbReference>
<dbReference type="Pfam" id="PF13932">
    <property type="entry name" value="SAM_GIDA_C"/>
    <property type="match status" value="1"/>
</dbReference>
<dbReference type="SMART" id="SM01228">
    <property type="entry name" value="GIDA_assoc_3"/>
    <property type="match status" value="1"/>
</dbReference>
<dbReference type="SUPFAM" id="SSF51905">
    <property type="entry name" value="FAD/NAD(P)-binding domain"/>
    <property type="match status" value="1"/>
</dbReference>
<dbReference type="PROSITE" id="PS01280">
    <property type="entry name" value="GIDA_1"/>
    <property type="match status" value="1"/>
</dbReference>
<dbReference type="PROSITE" id="PS01281">
    <property type="entry name" value="GIDA_2"/>
    <property type="match status" value="1"/>
</dbReference>
<evidence type="ECO:0000255" key="1">
    <source>
        <dbReference type="HAMAP-Rule" id="MF_00129"/>
    </source>
</evidence>
<gene>
    <name evidence="1" type="primary">mnmG</name>
    <name evidence="1" type="synonym">gidA</name>
    <name type="ordered locus">KPN78578_41050</name>
    <name type="ORF">KPN_04146</name>
</gene>
<comment type="function">
    <text evidence="1">NAD-binding protein involved in the addition of a carboxymethylaminomethyl (cmnm) group at the wobble position (U34) of certain tRNAs, forming tRNA-cmnm(5)s(2)U34.</text>
</comment>
<comment type="cofactor">
    <cofactor evidence="1">
        <name>FAD</name>
        <dbReference type="ChEBI" id="CHEBI:57692"/>
    </cofactor>
</comment>
<comment type="subunit">
    <text evidence="1">Homodimer. Heterotetramer of two MnmE and two MnmG subunits.</text>
</comment>
<comment type="subcellular location">
    <subcellularLocation>
        <location evidence="1">Cytoplasm</location>
    </subcellularLocation>
</comment>
<comment type="similarity">
    <text evidence="1">Belongs to the MnmG family.</text>
</comment>
<name>MNMG_KLEP7</name>
<proteinExistence type="inferred from homology"/>
<feature type="chain" id="PRO_0000345283" description="tRNA uridine 5-carboxymethylaminomethyl modification enzyme MnmG">
    <location>
        <begin position="1"/>
        <end position="629"/>
    </location>
</feature>
<feature type="binding site" evidence="1">
    <location>
        <begin position="13"/>
        <end position="18"/>
    </location>
    <ligand>
        <name>FAD</name>
        <dbReference type="ChEBI" id="CHEBI:57692"/>
    </ligand>
</feature>
<feature type="binding site" evidence="1">
    <location>
        <position position="125"/>
    </location>
    <ligand>
        <name>FAD</name>
        <dbReference type="ChEBI" id="CHEBI:57692"/>
    </ligand>
</feature>
<feature type="binding site" evidence="1">
    <location>
        <position position="180"/>
    </location>
    <ligand>
        <name>FAD</name>
        <dbReference type="ChEBI" id="CHEBI:57692"/>
    </ligand>
</feature>
<feature type="binding site" evidence="1">
    <location>
        <begin position="273"/>
        <end position="287"/>
    </location>
    <ligand>
        <name>NAD(+)</name>
        <dbReference type="ChEBI" id="CHEBI:57540"/>
    </ligand>
</feature>
<feature type="binding site" evidence="1">
    <location>
        <position position="370"/>
    </location>
    <ligand>
        <name>FAD</name>
        <dbReference type="ChEBI" id="CHEBI:57692"/>
    </ligand>
</feature>
<organism>
    <name type="scientific">Klebsiella pneumoniae subsp. pneumoniae (strain ATCC 700721 / MGH 78578)</name>
    <dbReference type="NCBI Taxonomy" id="272620"/>
    <lineage>
        <taxon>Bacteria</taxon>
        <taxon>Pseudomonadati</taxon>
        <taxon>Pseudomonadota</taxon>
        <taxon>Gammaproteobacteria</taxon>
        <taxon>Enterobacterales</taxon>
        <taxon>Enterobacteriaceae</taxon>
        <taxon>Klebsiella/Raoultella group</taxon>
        <taxon>Klebsiella</taxon>
        <taxon>Klebsiella pneumoniae complex</taxon>
    </lineage>
</organism>
<keyword id="KW-0963">Cytoplasm</keyword>
<keyword id="KW-0274">FAD</keyword>
<keyword id="KW-0285">Flavoprotein</keyword>
<keyword id="KW-0520">NAD</keyword>
<keyword id="KW-0819">tRNA processing</keyword>
<accession>A6TG45</accession>
<reference key="1">
    <citation type="submission" date="2006-09" db="EMBL/GenBank/DDBJ databases">
        <authorList>
            <consortium name="The Klebsiella pneumonia Genome Sequencing Project"/>
            <person name="McClelland M."/>
            <person name="Sanderson E.K."/>
            <person name="Spieth J."/>
            <person name="Clifton W.S."/>
            <person name="Latreille P."/>
            <person name="Sabo A."/>
            <person name="Pepin K."/>
            <person name="Bhonagiri V."/>
            <person name="Porwollik S."/>
            <person name="Ali J."/>
            <person name="Wilson R.K."/>
        </authorList>
    </citation>
    <scope>NUCLEOTIDE SEQUENCE [LARGE SCALE GENOMIC DNA]</scope>
    <source>
        <strain>ATCC 700721 / MGH 78578</strain>
    </source>
</reference>
<protein>
    <recommendedName>
        <fullName evidence="1">tRNA uridine 5-carboxymethylaminomethyl modification enzyme MnmG</fullName>
    </recommendedName>
    <alternativeName>
        <fullName evidence="1">Glucose-inhibited division protein A</fullName>
    </alternativeName>
</protein>